<organism>
    <name type="scientific">Mus musculus</name>
    <name type="common">Mouse</name>
    <dbReference type="NCBI Taxonomy" id="10090"/>
    <lineage>
        <taxon>Eukaryota</taxon>
        <taxon>Metazoa</taxon>
        <taxon>Chordata</taxon>
        <taxon>Craniata</taxon>
        <taxon>Vertebrata</taxon>
        <taxon>Euteleostomi</taxon>
        <taxon>Mammalia</taxon>
        <taxon>Eutheria</taxon>
        <taxon>Euarchontoglires</taxon>
        <taxon>Glires</taxon>
        <taxon>Rodentia</taxon>
        <taxon>Myomorpha</taxon>
        <taxon>Muroidea</taxon>
        <taxon>Muridae</taxon>
        <taxon>Murinae</taxon>
        <taxon>Mus</taxon>
        <taxon>Mus</taxon>
    </lineage>
</organism>
<keyword id="KW-0963">Cytoplasm</keyword>
<keyword id="KW-0256">Endoplasmic reticulum</keyword>
<keyword id="KW-0378">Hydrolase</keyword>
<keyword id="KW-0443">Lipid metabolism</keyword>
<keyword id="KW-0472">Membrane</keyword>
<keyword id="KW-1185">Reference proteome</keyword>
<keyword id="KW-0812">Transmembrane</keyword>
<keyword id="KW-1133">Transmembrane helix</keyword>
<comment type="function">
    <text evidence="1">Catalyzes the hydrolysis of the vinyl ether bond of choline or ethanolamine lysoplasmalogens, forming fatty aldehyde and glycerophosphocholine or glycerophosphoethanolamine, respectively and is specific for the sn-2-deacylated (lyso) form of plasmalogen.</text>
</comment>
<comment type="catalytic activity">
    <reaction evidence="1">
        <text>a 1-O-(1Z-alkenyl)-sn-glycero-3-phosphocholine + H2O = a 2,3-saturated aldehyde + sn-glycerol 3-phosphocholine</text>
        <dbReference type="Rhea" id="RHEA:22544"/>
        <dbReference type="ChEBI" id="CHEBI:15377"/>
        <dbReference type="ChEBI" id="CHEBI:16870"/>
        <dbReference type="ChEBI" id="CHEBI:73359"/>
        <dbReference type="ChEBI" id="CHEBI:77287"/>
        <dbReference type="EC" id="3.3.2.2"/>
    </reaction>
</comment>
<comment type="catalytic activity">
    <reaction evidence="1">
        <text>a 1-O-(1Z-alkenyl)-sn-glycero-3-phosphoethanolamine + H2O = a 2,3-saturated aldehyde + sn-glycero-3-phosphoethanolamine</text>
        <dbReference type="Rhea" id="RHEA:16905"/>
        <dbReference type="ChEBI" id="CHEBI:15377"/>
        <dbReference type="ChEBI" id="CHEBI:73359"/>
        <dbReference type="ChEBI" id="CHEBI:77288"/>
        <dbReference type="ChEBI" id="CHEBI:143890"/>
        <dbReference type="EC" id="3.3.2.2"/>
    </reaction>
</comment>
<comment type="activity regulation">
    <text evidence="2">Competitively inhibited by lysophosphatidic acid.</text>
</comment>
<comment type="subunit">
    <text evidence="2">Homodimer.</text>
</comment>
<comment type="subcellular location">
    <subcellularLocation>
        <location evidence="3">Endoplasmic reticulum membrane</location>
        <topology evidence="4">Multi-pass membrane protein</topology>
    </subcellularLocation>
    <subcellularLocation>
        <location evidence="2">Cytoplasm</location>
    </subcellularLocation>
</comment>
<comment type="tissue specificity">
    <text evidence="5">Enriched in liver. Also detected in brain and testis.</text>
</comment>
<comment type="developmental stage">
    <text evidence="5">Expressed in embryo.</text>
</comment>
<comment type="similarity">
    <text evidence="6">Belongs to the TMEM86 family.</text>
</comment>
<dbReference type="EC" id="3.3.2.2" evidence="1"/>
<dbReference type="EMBL" id="BC100527">
    <property type="protein sequence ID" value="AAI00528.1"/>
    <property type="molecule type" value="mRNA"/>
</dbReference>
<dbReference type="CCDS" id="CCDS20739.1"/>
<dbReference type="RefSeq" id="NP_075929.1">
    <property type="nucleotide sequence ID" value="NM_023440.3"/>
</dbReference>
<dbReference type="FunCoup" id="Q497J1">
    <property type="interactions" value="78"/>
</dbReference>
<dbReference type="STRING" id="10090.ENSMUSP00000060237"/>
<dbReference type="iPTMnet" id="Q497J1"/>
<dbReference type="PhosphoSitePlus" id="Q497J1"/>
<dbReference type="PaxDb" id="10090-ENSMUSP00000060237"/>
<dbReference type="ProteomicsDB" id="259568"/>
<dbReference type="Antibodypedia" id="33044">
    <property type="antibodies" value="15 antibodies from 8 providers"/>
</dbReference>
<dbReference type="Ensembl" id="ENSMUST00000055085.8">
    <property type="protein sequence ID" value="ENSMUSP00000060237.7"/>
    <property type="gene ID" value="ENSMUSG00000045282.8"/>
</dbReference>
<dbReference type="GeneID" id="68255"/>
<dbReference type="KEGG" id="mmu:68255"/>
<dbReference type="UCSC" id="uc009eya.1">
    <property type="organism name" value="mouse"/>
</dbReference>
<dbReference type="AGR" id="MGI:1915505"/>
<dbReference type="CTD" id="255043"/>
<dbReference type="MGI" id="MGI:1915505">
    <property type="gene designation" value="Tmem86b"/>
</dbReference>
<dbReference type="VEuPathDB" id="HostDB:ENSMUSG00000045282"/>
<dbReference type="eggNOG" id="KOG4804">
    <property type="taxonomic scope" value="Eukaryota"/>
</dbReference>
<dbReference type="GeneTree" id="ENSGT00390000007101"/>
<dbReference type="HOGENOM" id="CLU_079086_1_0_1"/>
<dbReference type="InParanoid" id="Q497J1"/>
<dbReference type="OMA" id="ILYMSTY"/>
<dbReference type="OrthoDB" id="2133758at2759"/>
<dbReference type="PhylomeDB" id="Q497J1"/>
<dbReference type="TreeFam" id="TF324663"/>
<dbReference type="Reactome" id="R-MMU-1482788">
    <property type="pathway name" value="Acyl chain remodelling of PC"/>
</dbReference>
<dbReference type="BioGRID-ORCS" id="68255">
    <property type="hits" value="2 hits in 78 CRISPR screens"/>
</dbReference>
<dbReference type="ChiTaRS" id="Tmem86b">
    <property type="organism name" value="mouse"/>
</dbReference>
<dbReference type="PRO" id="PR:Q497J1"/>
<dbReference type="Proteomes" id="UP000000589">
    <property type="component" value="Chromosome 7"/>
</dbReference>
<dbReference type="RNAct" id="Q497J1">
    <property type="molecule type" value="protein"/>
</dbReference>
<dbReference type="Bgee" id="ENSMUSG00000045282">
    <property type="expression patterns" value="Expressed in bone marrow and 62 other cell types or tissues"/>
</dbReference>
<dbReference type="ExpressionAtlas" id="Q497J1">
    <property type="expression patterns" value="baseline and differential"/>
</dbReference>
<dbReference type="GO" id="GO:0005737">
    <property type="term" value="C:cytoplasm"/>
    <property type="evidence" value="ECO:0000250"/>
    <property type="project" value="UniProtKB"/>
</dbReference>
<dbReference type="GO" id="GO:0005789">
    <property type="term" value="C:endoplasmic reticulum membrane"/>
    <property type="evidence" value="ECO:0000250"/>
    <property type="project" value="UniProtKB"/>
</dbReference>
<dbReference type="GO" id="GO:0016020">
    <property type="term" value="C:membrane"/>
    <property type="evidence" value="ECO:0000250"/>
    <property type="project" value="UniProtKB"/>
</dbReference>
<dbReference type="GO" id="GO:0047408">
    <property type="term" value="F:alkenylglycerophosphocholine hydrolase activity"/>
    <property type="evidence" value="ECO:0000250"/>
    <property type="project" value="UniProtKB"/>
</dbReference>
<dbReference type="GO" id="GO:0047826">
    <property type="term" value="F:D-lysine 5,6-aminomutase activity"/>
    <property type="evidence" value="ECO:0000250"/>
    <property type="project" value="UniProtKB"/>
</dbReference>
<dbReference type="GO" id="GO:0042802">
    <property type="term" value="F:identical protein binding"/>
    <property type="evidence" value="ECO:0007669"/>
    <property type="project" value="Ensembl"/>
</dbReference>
<dbReference type="GO" id="GO:0046485">
    <property type="term" value="P:ether lipid metabolic process"/>
    <property type="evidence" value="ECO:0000250"/>
    <property type="project" value="UniProtKB"/>
</dbReference>
<dbReference type="InterPro" id="IPR012506">
    <property type="entry name" value="TMEM86B-like"/>
</dbReference>
<dbReference type="PANTHER" id="PTHR31885">
    <property type="entry name" value="GH04784P"/>
    <property type="match status" value="1"/>
</dbReference>
<dbReference type="PANTHER" id="PTHR31885:SF7">
    <property type="entry name" value="LYSOPLASMALOGENASE"/>
    <property type="match status" value="1"/>
</dbReference>
<dbReference type="Pfam" id="PF07947">
    <property type="entry name" value="YhhN"/>
    <property type="match status" value="1"/>
</dbReference>
<feature type="chain" id="PRO_0000201842" description="Lysoplasmalogenase TMEM86B">
    <location>
        <begin position="1"/>
        <end position="226"/>
    </location>
</feature>
<feature type="topological domain" description="Cytoplasmic" evidence="6">
    <location>
        <begin position="1"/>
        <end position="23"/>
    </location>
</feature>
<feature type="transmembrane region" description="Helical" evidence="4">
    <location>
        <begin position="24"/>
        <end position="40"/>
    </location>
</feature>
<feature type="topological domain" description="Extracellular" evidence="6">
    <location>
        <begin position="41"/>
        <end position="46"/>
    </location>
</feature>
<feature type="transmembrane region" description="Helical" evidence="4">
    <location>
        <begin position="47"/>
        <end position="68"/>
    </location>
</feature>
<feature type="topological domain" description="Cytoplasmic" evidence="6">
    <location>
        <begin position="69"/>
        <end position="74"/>
    </location>
</feature>
<feature type="transmembrane region" description="Helical" evidence="4">
    <location>
        <begin position="75"/>
        <end position="93"/>
    </location>
</feature>
<feature type="topological domain" description="Extracellular" evidence="6">
    <location>
        <begin position="94"/>
        <end position="99"/>
    </location>
</feature>
<feature type="transmembrane region" description="Helical" evidence="4">
    <location>
        <begin position="100"/>
        <end position="117"/>
    </location>
</feature>
<feature type="topological domain" description="Cytoplasmic" evidence="6">
    <location>
        <begin position="118"/>
        <end position="123"/>
    </location>
</feature>
<feature type="transmembrane region" description="Helical" evidence="4">
    <location>
        <begin position="124"/>
        <end position="140"/>
    </location>
</feature>
<feature type="topological domain" description="Extracellular" evidence="6">
    <location>
        <begin position="141"/>
        <end position="146"/>
    </location>
</feature>
<feature type="transmembrane region" description="Helical" evidence="4">
    <location>
        <begin position="147"/>
        <end position="163"/>
    </location>
</feature>
<feature type="topological domain" description="Cytoplasmic" evidence="6">
    <location>
        <begin position="164"/>
        <end position="171"/>
    </location>
</feature>
<feature type="transmembrane region" description="Helical" evidence="4">
    <location>
        <begin position="172"/>
        <end position="188"/>
    </location>
</feature>
<feature type="topological domain" description="Extracellular" evidence="6">
    <location>
        <begin position="189"/>
        <end position="199"/>
    </location>
</feature>
<feature type="transmembrane region" description="Helical" evidence="4">
    <location>
        <begin position="200"/>
        <end position="218"/>
    </location>
</feature>
<feature type="topological domain" description="Cytoplasmic" evidence="6">
    <location>
        <begin position="219"/>
        <end position="226"/>
    </location>
</feature>
<gene>
    <name type="primary">Tmem86b</name>
</gene>
<reference key="1">
    <citation type="journal article" date="2004" name="Genome Res.">
        <title>The status, quality, and expansion of the NIH full-length cDNA project: the Mammalian Gene Collection (MGC).</title>
        <authorList>
            <consortium name="The MGC Project Team"/>
        </authorList>
    </citation>
    <scope>NUCLEOTIDE SEQUENCE [LARGE SCALE MRNA]</scope>
    <source>
        <tissue>Testis</tissue>
    </source>
</reference>
<reference key="2">
    <citation type="journal article" date="2011" name="J. Biol. Chem.">
        <title>Purification, identification, and cloning of lysoplasmalogenase, the enzyme that catalyzes hydrolysis of the vinyl ether bond of lysoplasmalogen.</title>
        <authorList>
            <person name="Wu L.C."/>
            <person name="Pfeiffer D.R."/>
            <person name="Calhoon E.A."/>
            <person name="Madiai F."/>
            <person name="Marcucci G."/>
            <person name="Liu S."/>
            <person name="Jurkowitz M.S."/>
        </authorList>
    </citation>
    <scope>TISSUE SPECIFICITY</scope>
    <scope>DEVELOPMENTAL STAGE</scope>
</reference>
<proteinExistence type="evidence at transcript level"/>
<evidence type="ECO:0000250" key="1">
    <source>
        <dbReference type="UniProtKB" id="B0BNF0"/>
    </source>
</evidence>
<evidence type="ECO:0000250" key="2">
    <source>
        <dbReference type="UniProtKB" id="Q8N661"/>
    </source>
</evidence>
<evidence type="ECO:0000250" key="3">
    <source>
        <dbReference type="UniProtKB" id="Q9D8N3"/>
    </source>
</evidence>
<evidence type="ECO:0000255" key="4"/>
<evidence type="ECO:0000269" key="5">
    <source>
    </source>
</evidence>
<evidence type="ECO:0000305" key="6"/>
<sequence>MDARKEGLPLETLFSDQYPQVRRWLAPFILACSLYFLLWIPVDQPSWVSALIKCQPILCLVVFLWAVAPGGSSTWLLQGALVCSAVGDACLIWPEAFFYGTAAFSVAHLFYLGAFGLTPLQPGLLLCTTLASLTYYSFLLLHLEQGMVLPVMAYGLILNSMLWRSLVWGGSASWGAVLFTFSDGVLAWDTFVYSLPFARLVTMSTYYAAQLLLILSALRNPGLKTH</sequence>
<protein>
    <recommendedName>
        <fullName>Lysoplasmalogenase TMEM86B</fullName>
        <ecNumber evidence="1">3.3.2.2</ecNumber>
    </recommendedName>
    <alternativeName>
        <fullName>Transmembrane protein 86B</fullName>
    </alternativeName>
</protein>
<accession>Q497J1</accession>
<name>TM86B_MOUSE</name>